<keyword id="KW-0067">ATP-binding</keyword>
<keyword id="KW-0963">Cytoplasm</keyword>
<keyword id="KW-0227">DNA damage</keyword>
<keyword id="KW-0228">DNA excision</keyword>
<keyword id="KW-0234">DNA repair</keyword>
<keyword id="KW-0267">Excision nuclease</keyword>
<keyword id="KW-0547">Nucleotide-binding</keyword>
<keyword id="KW-1185">Reference proteome</keyword>
<keyword id="KW-0742">SOS response</keyword>
<proteinExistence type="inferred from homology"/>
<reference key="1">
    <citation type="journal article" date="2000" name="Nature">
        <title>The genome sequence of the food-borne pathogen Campylobacter jejuni reveals hypervariable sequences.</title>
        <authorList>
            <person name="Parkhill J."/>
            <person name="Wren B.W."/>
            <person name="Mungall K.L."/>
            <person name="Ketley J.M."/>
            <person name="Churcher C.M."/>
            <person name="Basham D."/>
            <person name="Chillingworth T."/>
            <person name="Davies R.M."/>
            <person name="Feltwell T."/>
            <person name="Holroyd S."/>
            <person name="Jagels K."/>
            <person name="Karlyshev A.V."/>
            <person name="Moule S."/>
            <person name="Pallen M.J."/>
            <person name="Penn C.W."/>
            <person name="Quail M.A."/>
            <person name="Rajandream M.A."/>
            <person name="Rutherford K.M."/>
            <person name="van Vliet A.H.M."/>
            <person name="Whitehead S."/>
            <person name="Barrell B.G."/>
        </authorList>
    </citation>
    <scope>NUCLEOTIDE SEQUENCE [LARGE SCALE GENOMIC DNA]</scope>
    <source>
        <strain>ATCC 700819 / NCTC 11168</strain>
    </source>
</reference>
<sequence length="657" mass="75936">MLELTSEFKPSPDQQEAIKGIVKSIKKGNKYQTLLGVTGSGKTFTMANVIKELNIPTLIMSHNKSLCAQLYSEFKGFFSKNHVEYFISYYDYYQPEAYIPRTDVFIEKDSSTNEDLERLRLSATASLLSYEDVVCIASVSANYGLGNPNEYIGMVLIFELGMQISQKELLKKLVDMGYKRNDNFFDRADFRVQGDIIDIYPAYYEDEVVRLEFFGDELDAMYHYNVLENKKGKDLKRFILYPTSQFSVGETRLKQAIKDIKAELNERLAYFEHENKLVEYQRLKQRVEFDLEMLTSTGMCKGVENYARHLTGLKEGDTPYTLFDYFAIKDRKFLVIVDESHVSLPQFRGMFAGDRSRKQTLVDYGFRLPSALDNRPLMFDEFIHKNCQFLFVSATPAPLELELSKENIFHQIMRPTGLLDPLIELKDSDNQVEILFDEAKKVIQRNERVLVTVLTKKLAEELTRYYLELGIKVKYMHSDIDAIERNEIIRGLRSGAFDMLIGINLLREGLDLPEVSLIAIMDADKEGFLRSTTSLIQTMGRAARNVNGKVLLFCKKITKSMQEAMDTTNERRKLQMAYNKKYNITPTSVKRHIEESLKNEEDLGEIYRKGKKLEKMPASERAKLVKELRKQMLEAAKALEFEKAAAIRDEINKLRDL</sequence>
<feature type="chain" id="PRO_0000138383" description="UvrABC system protein B">
    <location>
        <begin position="1"/>
        <end position="657"/>
    </location>
</feature>
<feature type="domain" description="Helicase ATP-binding" evidence="1">
    <location>
        <begin position="23"/>
        <end position="414"/>
    </location>
</feature>
<feature type="domain" description="Helicase C-terminal" evidence="1">
    <location>
        <begin position="431"/>
        <end position="593"/>
    </location>
</feature>
<feature type="domain" description="UVR" evidence="1">
    <location>
        <begin position="622"/>
        <end position="657"/>
    </location>
</feature>
<feature type="short sequence motif" description="Beta-hairpin">
    <location>
        <begin position="89"/>
        <end position="112"/>
    </location>
</feature>
<feature type="binding site" evidence="1">
    <location>
        <begin position="36"/>
        <end position="43"/>
    </location>
    <ligand>
        <name>ATP</name>
        <dbReference type="ChEBI" id="CHEBI:30616"/>
    </ligand>
</feature>
<evidence type="ECO:0000255" key="1">
    <source>
        <dbReference type="HAMAP-Rule" id="MF_00204"/>
    </source>
</evidence>
<dbReference type="EMBL" id="AL111168">
    <property type="protein sequence ID" value="CAL34817.1"/>
    <property type="molecule type" value="Genomic_DNA"/>
</dbReference>
<dbReference type="PIR" id="C81338">
    <property type="entry name" value="C81338"/>
</dbReference>
<dbReference type="RefSeq" id="WP_002855027.1">
    <property type="nucleotide sequence ID" value="NZ_SZUC01000002.1"/>
</dbReference>
<dbReference type="RefSeq" id="YP_002344098.1">
    <property type="nucleotide sequence ID" value="NC_002163.1"/>
</dbReference>
<dbReference type="SMR" id="Q9PPM7"/>
<dbReference type="IntAct" id="Q9PPM7">
    <property type="interactions" value="7"/>
</dbReference>
<dbReference type="STRING" id="192222.Cj0680c"/>
<dbReference type="PaxDb" id="192222-Cj0680c"/>
<dbReference type="EnsemblBacteria" id="CAL34817">
    <property type="protein sequence ID" value="CAL34817"/>
    <property type="gene ID" value="Cj0680c"/>
</dbReference>
<dbReference type="GeneID" id="904998"/>
<dbReference type="KEGG" id="cje:Cj0680c"/>
<dbReference type="PATRIC" id="fig|192222.6.peg.672"/>
<dbReference type="eggNOG" id="COG0556">
    <property type="taxonomic scope" value="Bacteria"/>
</dbReference>
<dbReference type="HOGENOM" id="CLU_009621_2_1_7"/>
<dbReference type="OrthoDB" id="9806651at2"/>
<dbReference type="Proteomes" id="UP000000799">
    <property type="component" value="Chromosome"/>
</dbReference>
<dbReference type="GO" id="GO:0005737">
    <property type="term" value="C:cytoplasm"/>
    <property type="evidence" value="ECO:0007669"/>
    <property type="project" value="UniProtKB-SubCell"/>
</dbReference>
<dbReference type="GO" id="GO:0009380">
    <property type="term" value="C:excinuclease repair complex"/>
    <property type="evidence" value="ECO:0007669"/>
    <property type="project" value="InterPro"/>
</dbReference>
<dbReference type="GO" id="GO:0005524">
    <property type="term" value="F:ATP binding"/>
    <property type="evidence" value="ECO:0007669"/>
    <property type="project" value="UniProtKB-UniRule"/>
</dbReference>
<dbReference type="GO" id="GO:0016887">
    <property type="term" value="F:ATP hydrolysis activity"/>
    <property type="evidence" value="ECO:0007669"/>
    <property type="project" value="InterPro"/>
</dbReference>
<dbReference type="GO" id="GO:0003677">
    <property type="term" value="F:DNA binding"/>
    <property type="evidence" value="ECO:0007669"/>
    <property type="project" value="UniProtKB-UniRule"/>
</dbReference>
<dbReference type="GO" id="GO:0009381">
    <property type="term" value="F:excinuclease ABC activity"/>
    <property type="evidence" value="ECO:0007669"/>
    <property type="project" value="UniProtKB-UniRule"/>
</dbReference>
<dbReference type="GO" id="GO:0006289">
    <property type="term" value="P:nucleotide-excision repair"/>
    <property type="evidence" value="ECO:0007669"/>
    <property type="project" value="UniProtKB-UniRule"/>
</dbReference>
<dbReference type="GO" id="GO:0009432">
    <property type="term" value="P:SOS response"/>
    <property type="evidence" value="ECO:0007669"/>
    <property type="project" value="UniProtKB-UniRule"/>
</dbReference>
<dbReference type="CDD" id="cd17916">
    <property type="entry name" value="DEXHc_UvrB"/>
    <property type="match status" value="1"/>
</dbReference>
<dbReference type="CDD" id="cd18790">
    <property type="entry name" value="SF2_C_UvrB"/>
    <property type="match status" value="1"/>
</dbReference>
<dbReference type="Gene3D" id="3.40.50.300">
    <property type="entry name" value="P-loop containing nucleotide triphosphate hydrolases"/>
    <property type="match status" value="3"/>
</dbReference>
<dbReference type="Gene3D" id="4.10.860.10">
    <property type="entry name" value="UVR domain"/>
    <property type="match status" value="1"/>
</dbReference>
<dbReference type="HAMAP" id="MF_00204">
    <property type="entry name" value="UvrB"/>
    <property type="match status" value="1"/>
</dbReference>
<dbReference type="InterPro" id="IPR006935">
    <property type="entry name" value="Helicase/UvrB_N"/>
</dbReference>
<dbReference type="InterPro" id="IPR014001">
    <property type="entry name" value="Helicase_ATP-bd"/>
</dbReference>
<dbReference type="InterPro" id="IPR001650">
    <property type="entry name" value="Helicase_C-like"/>
</dbReference>
<dbReference type="InterPro" id="IPR027417">
    <property type="entry name" value="P-loop_NTPase"/>
</dbReference>
<dbReference type="InterPro" id="IPR001943">
    <property type="entry name" value="UVR_dom"/>
</dbReference>
<dbReference type="InterPro" id="IPR036876">
    <property type="entry name" value="UVR_dom_sf"/>
</dbReference>
<dbReference type="InterPro" id="IPR004807">
    <property type="entry name" value="UvrB"/>
</dbReference>
<dbReference type="InterPro" id="IPR041471">
    <property type="entry name" value="UvrB_inter"/>
</dbReference>
<dbReference type="InterPro" id="IPR024759">
    <property type="entry name" value="UvrB_YAD/RRR_dom"/>
</dbReference>
<dbReference type="NCBIfam" id="NF003673">
    <property type="entry name" value="PRK05298.1"/>
    <property type="match status" value="1"/>
</dbReference>
<dbReference type="NCBIfam" id="TIGR00631">
    <property type="entry name" value="uvrb"/>
    <property type="match status" value="1"/>
</dbReference>
<dbReference type="PANTHER" id="PTHR24029">
    <property type="entry name" value="UVRABC SYSTEM PROTEIN B"/>
    <property type="match status" value="1"/>
</dbReference>
<dbReference type="PANTHER" id="PTHR24029:SF0">
    <property type="entry name" value="UVRABC SYSTEM PROTEIN B"/>
    <property type="match status" value="1"/>
</dbReference>
<dbReference type="Pfam" id="PF00271">
    <property type="entry name" value="Helicase_C"/>
    <property type="match status" value="1"/>
</dbReference>
<dbReference type="Pfam" id="PF04851">
    <property type="entry name" value="ResIII"/>
    <property type="match status" value="1"/>
</dbReference>
<dbReference type="Pfam" id="PF02151">
    <property type="entry name" value="UVR"/>
    <property type="match status" value="1"/>
</dbReference>
<dbReference type="Pfam" id="PF12344">
    <property type="entry name" value="UvrB"/>
    <property type="match status" value="1"/>
</dbReference>
<dbReference type="Pfam" id="PF17757">
    <property type="entry name" value="UvrB_inter"/>
    <property type="match status" value="1"/>
</dbReference>
<dbReference type="SMART" id="SM00487">
    <property type="entry name" value="DEXDc"/>
    <property type="match status" value="1"/>
</dbReference>
<dbReference type="SMART" id="SM00490">
    <property type="entry name" value="HELICc"/>
    <property type="match status" value="1"/>
</dbReference>
<dbReference type="SUPFAM" id="SSF46600">
    <property type="entry name" value="C-terminal UvrC-binding domain of UvrB"/>
    <property type="match status" value="1"/>
</dbReference>
<dbReference type="SUPFAM" id="SSF52540">
    <property type="entry name" value="P-loop containing nucleoside triphosphate hydrolases"/>
    <property type="match status" value="2"/>
</dbReference>
<dbReference type="PROSITE" id="PS51192">
    <property type="entry name" value="HELICASE_ATP_BIND_1"/>
    <property type="match status" value="2"/>
</dbReference>
<dbReference type="PROSITE" id="PS51194">
    <property type="entry name" value="HELICASE_CTER"/>
    <property type="match status" value="1"/>
</dbReference>
<dbReference type="PROSITE" id="PS50151">
    <property type="entry name" value="UVR"/>
    <property type="match status" value="1"/>
</dbReference>
<accession>Q9PPM7</accession>
<accession>Q0PAJ9</accession>
<name>UVRB_CAMJE</name>
<organism>
    <name type="scientific">Campylobacter jejuni subsp. jejuni serotype O:2 (strain ATCC 700819 / NCTC 11168)</name>
    <dbReference type="NCBI Taxonomy" id="192222"/>
    <lineage>
        <taxon>Bacteria</taxon>
        <taxon>Pseudomonadati</taxon>
        <taxon>Campylobacterota</taxon>
        <taxon>Epsilonproteobacteria</taxon>
        <taxon>Campylobacterales</taxon>
        <taxon>Campylobacteraceae</taxon>
        <taxon>Campylobacter</taxon>
    </lineage>
</organism>
<protein>
    <recommendedName>
        <fullName evidence="1">UvrABC system protein B</fullName>
        <shortName evidence="1">Protein UvrB</shortName>
    </recommendedName>
    <alternativeName>
        <fullName evidence="1">Excinuclease ABC subunit B</fullName>
    </alternativeName>
</protein>
<comment type="function">
    <text evidence="1">The UvrABC repair system catalyzes the recognition and processing of DNA lesions. A damage recognition complex composed of 2 UvrA and 2 UvrB subunits scans DNA for abnormalities. Upon binding of the UvrA(2)B(2) complex to a putative damaged site, the DNA wraps around one UvrB monomer. DNA wrap is dependent on ATP binding by UvrB and probably causes local melting of the DNA helix, facilitating insertion of UvrB beta-hairpin between the DNA strands. Then UvrB probes one DNA strand for the presence of a lesion. If a lesion is found the UvrA subunits dissociate and the UvrB-DNA preincision complex is formed. This complex is subsequently bound by UvrC and the second UvrB is released. If no lesion is found, the DNA wraps around the other UvrB subunit that will check the other stand for damage.</text>
</comment>
<comment type="subunit">
    <text evidence="1">Forms a heterotetramer with UvrA during the search for lesions. Interacts with UvrC in an incision complex.</text>
</comment>
<comment type="subcellular location">
    <subcellularLocation>
        <location evidence="1">Cytoplasm</location>
    </subcellularLocation>
</comment>
<comment type="domain">
    <text evidence="1">The beta-hairpin motif is involved in DNA binding.</text>
</comment>
<comment type="similarity">
    <text evidence="1">Belongs to the UvrB family.</text>
</comment>
<gene>
    <name evidence="1" type="primary">uvrB</name>
    <name type="ordered locus">Cj0680c</name>
</gene>